<accession>Q9H4Z2</accession>
<accession>B4DLG7</accession>
<accession>Q548D0</accession>
<accession>Q9H684</accession>
<reference key="1">
    <citation type="journal article" date="2002" name="Mol. Cell. Biol.">
        <title>NRC-interacting factor 1 is a novel cotransducer that interacts with and regulates the activity of the nuclear hormone receptor coactivator NRC.</title>
        <authorList>
            <person name="Mahajan M.A."/>
            <person name="Murray A."/>
            <person name="Samuels H.H."/>
        </authorList>
    </citation>
    <scope>NUCLEOTIDE SEQUENCE [MRNA] (ISOFORM 1)</scope>
    <scope>FUNCTION</scope>
    <scope>SUBCELLULAR LOCATION</scope>
    <scope>INTERACTION WITH NCOA6</scope>
    <scope>TISSUE SPECIFICITY</scope>
    <source>
        <tissue>Teratocarcinoma</tissue>
    </source>
</reference>
<reference key="2">
    <citation type="journal article" date="2004" name="Nat. Genet.">
        <title>Complete sequencing and characterization of 21,243 full-length human cDNAs.</title>
        <authorList>
            <person name="Ota T."/>
            <person name="Suzuki Y."/>
            <person name="Nishikawa T."/>
            <person name="Otsuki T."/>
            <person name="Sugiyama T."/>
            <person name="Irie R."/>
            <person name="Wakamatsu A."/>
            <person name="Hayashi K."/>
            <person name="Sato H."/>
            <person name="Nagai K."/>
            <person name="Kimura K."/>
            <person name="Makita H."/>
            <person name="Sekine M."/>
            <person name="Obayashi M."/>
            <person name="Nishi T."/>
            <person name="Shibahara T."/>
            <person name="Tanaka T."/>
            <person name="Ishii S."/>
            <person name="Yamamoto J."/>
            <person name="Saito K."/>
            <person name="Kawai Y."/>
            <person name="Isono Y."/>
            <person name="Nakamura Y."/>
            <person name="Nagahari K."/>
            <person name="Murakami K."/>
            <person name="Yasuda T."/>
            <person name="Iwayanagi T."/>
            <person name="Wagatsuma M."/>
            <person name="Shiratori A."/>
            <person name="Sudo H."/>
            <person name="Hosoiri T."/>
            <person name="Kaku Y."/>
            <person name="Kodaira H."/>
            <person name="Kondo H."/>
            <person name="Sugawara M."/>
            <person name="Takahashi M."/>
            <person name="Kanda K."/>
            <person name="Yokoi T."/>
            <person name="Furuya T."/>
            <person name="Kikkawa E."/>
            <person name="Omura Y."/>
            <person name="Abe K."/>
            <person name="Kamihara K."/>
            <person name="Katsuta N."/>
            <person name="Sato K."/>
            <person name="Tanikawa M."/>
            <person name="Yamazaki M."/>
            <person name="Ninomiya K."/>
            <person name="Ishibashi T."/>
            <person name="Yamashita H."/>
            <person name="Murakawa K."/>
            <person name="Fujimori K."/>
            <person name="Tanai H."/>
            <person name="Kimata M."/>
            <person name="Watanabe M."/>
            <person name="Hiraoka S."/>
            <person name="Chiba Y."/>
            <person name="Ishida S."/>
            <person name="Ono Y."/>
            <person name="Takiguchi S."/>
            <person name="Watanabe S."/>
            <person name="Yosida M."/>
            <person name="Hotuta T."/>
            <person name="Kusano J."/>
            <person name="Kanehori K."/>
            <person name="Takahashi-Fujii A."/>
            <person name="Hara H."/>
            <person name="Tanase T.-O."/>
            <person name="Nomura Y."/>
            <person name="Togiya S."/>
            <person name="Komai F."/>
            <person name="Hara R."/>
            <person name="Takeuchi K."/>
            <person name="Arita M."/>
            <person name="Imose N."/>
            <person name="Musashino K."/>
            <person name="Yuuki H."/>
            <person name="Oshima A."/>
            <person name="Sasaki N."/>
            <person name="Aotsuka S."/>
            <person name="Yoshikawa Y."/>
            <person name="Matsunawa H."/>
            <person name="Ichihara T."/>
            <person name="Shiohata N."/>
            <person name="Sano S."/>
            <person name="Moriya S."/>
            <person name="Momiyama H."/>
            <person name="Satoh N."/>
            <person name="Takami S."/>
            <person name="Terashima Y."/>
            <person name="Suzuki O."/>
            <person name="Nakagawa S."/>
            <person name="Senoh A."/>
            <person name="Mizoguchi H."/>
            <person name="Goto Y."/>
            <person name="Shimizu F."/>
            <person name="Wakebe H."/>
            <person name="Hishigaki H."/>
            <person name="Watanabe T."/>
            <person name="Sugiyama A."/>
            <person name="Takemoto M."/>
            <person name="Kawakami B."/>
            <person name="Yamazaki M."/>
            <person name="Watanabe K."/>
            <person name="Kumagai A."/>
            <person name="Itakura S."/>
            <person name="Fukuzumi Y."/>
            <person name="Fujimori Y."/>
            <person name="Komiyama M."/>
            <person name="Tashiro H."/>
            <person name="Tanigami A."/>
            <person name="Fujiwara T."/>
            <person name="Ono T."/>
            <person name="Yamada K."/>
            <person name="Fujii Y."/>
            <person name="Ozaki K."/>
            <person name="Hirao M."/>
            <person name="Ohmori Y."/>
            <person name="Kawabata A."/>
            <person name="Hikiji T."/>
            <person name="Kobatake N."/>
            <person name="Inagaki H."/>
            <person name="Ikema Y."/>
            <person name="Okamoto S."/>
            <person name="Okitani R."/>
            <person name="Kawakami T."/>
            <person name="Noguchi S."/>
            <person name="Itoh T."/>
            <person name="Shigeta K."/>
            <person name="Senba T."/>
            <person name="Matsumura K."/>
            <person name="Nakajima Y."/>
            <person name="Mizuno T."/>
            <person name="Morinaga M."/>
            <person name="Sasaki M."/>
            <person name="Togashi T."/>
            <person name="Oyama M."/>
            <person name="Hata H."/>
            <person name="Watanabe M."/>
            <person name="Komatsu T."/>
            <person name="Mizushima-Sugano J."/>
            <person name="Satoh T."/>
            <person name="Shirai Y."/>
            <person name="Takahashi Y."/>
            <person name="Nakagawa K."/>
            <person name="Okumura K."/>
            <person name="Nagase T."/>
            <person name="Nomura N."/>
            <person name="Kikuchi H."/>
            <person name="Masuho Y."/>
            <person name="Yamashita R."/>
            <person name="Nakai K."/>
            <person name="Yada T."/>
            <person name="Nakamura Y."/>
            <person name="Ohara O."/>
            <person name="Isogai T."/>
            <person name="Sugano S."/>
        </authorList>
    </citation>
    <scope>NUCLEOTIDE SEQUENCE [LARGE SCALE MRNA] (ISOFORM 2)</scope>
    <scope>VARIANT THR-294</scope>
    <source>
        <tissue>Kidney epithelium</tissue>
        <tissue>Tongue</tissue>
    </source>
</reference>
<reference key="3">
    <citation type="journal article" date="2001" name="Nature">
        <title>The DNA sequence and comparative analysis of human chromosome 20.</title>
        <authorList>
            <person name="Deloukas P."/>
            <person name="Matthews L.H."/>
            <person name="Ashurst J.L."/>
            <person name="Burton J."/>
            <person name="Gilbert J.G.R."/>
            <person name="Jones M."/>
            <person name="Stavrides G."/>
            <person name="Almeida J.P."/>
            <person name="Babbage A.K."/>
            <person name="Bagguley C.L."/>
            <person name="Bailey J."/>
            <person name="Barlow K.F."/>
            <person name="Bates K.N."/>
            <person name="Beard L.M."/>
            <person name="Beare D.M."/>
            <person name="Beasley O.P."/>
            <person name="Bird C.P."/>
            <person name="Blakey S.E."/>
            <person name="Bridgeman A.M."/>
            <person name="Brown A.J."/>
            <person name="Buck D."/>
            <person name="Burrill W.D."/>
            <person name="Butler A.P."/>
            <person name="Carder C."/>
            <person name="Carter N.P."/>
            <person name="Chapman J.C."/>
            <person name="Clamp M."/>
            <person name="Clark G."/>
            <person name="Clark L.N."/>
            <person name="Clark S.Y."/>
            <person name="Clee C.M."/>
            <person name="Clegg S."/>
            <person name="Cobley V.E."/>
            <person name="Collier R.E."/>
            <person name="Connor R.E."/>
            <person name="Corby N.R."/>
            <person name="Coulson A."/>
            <person name="Coville G.J."/>
            <person name="Deadman R."/>
            <person name="Dhami P.D."/>
            <person name="Dunn M."/>
            <person name="Ellington A.G."/>
            <person name="Frankland J.A."/>
            <person name="Fraser A."/>
            <person name="French L."/>
            <person name="Garner P."/>
            <person name="Grafham D.V."/>
            <person name="Griffiths C."/>
            <person name="Griffiths M.N.D."/>
            <person name="Gwilliam R."/>
            <person name="Hall R.E."/>
            <person name="Hammond S."/>
            <person name="Harley J.L."/>
            <person name="Heath P.D."/>
            <person name="Ho S."/>
            <person name="Holden J.L."/>
            <person name="Howden P.J."/>
            <person name="Huckle E."/>
            <person name="Hunt A.R."/>
            <person name="Hunt S.E."/>
            <person name="Jekosch K."/>
            <person name="Johnson C.M."/>
            <person name="Johnson D."/>
            <person name="Kay M.P."/>
            <person name="Kimberley A.M."/>
            <person name="King A."/>
            <person name="Knights A."/>
            <person name="Laird G.K."/>
            <person name="Lawlor S."/>
            <person name="Lehvaeslaiho M.H."/>
            <person name="Leversha M.A."/>
            <person name="Lloyd C."/>
            <person name="Lloyd D.M."/>
            <person name="Lovell J.D."/>
            <person name="Marsh V.L."/>
            <person name="Martin S.L."/>
            <person name="McConnachie L.J."/>
            <person name="McLay K."/>
            <person name="McMurray A.A."/>
            <person name="Milne S.A."/>
            <person name="Mistry D."/>
            <person name="Moore M.J.F."/>
            <person name="Mullikin J.C."/>
            <person name="Nickerson T."/>
            <person name="Oliver K."/>
            <person name="Parker A."/>
            <person name="Patel R."/>
            <person name="Pearce T.A.V."/>
            <person name="Peck A.I."/>
            <person name="Phillimore B.J.C.T."/>
            <person name="Prathalingam S.R."/>
            <person name="Plumb R.W."/>
            <person name="Ramsay H."/>
            <person name="Rice C.M."/>
            <person name="Ross M.T."/>
            <person name="Scott C.E."/>
            <person name="Sehra H.K."/>
            <person name="Shownkeen R."/>
            <person name="Sims S."/>
            <person name="Skuce C.D."/>
            <person name="Smith M.L."/>
            <person name="Soderlund C."/>
            <person name="Steward C.A."/>
            <person name="Sulston J.E."/>
            <person name="Swann R.M."/>
            <person name="Sycamore N."/>
            <person name="Taylor R."/>
            <person name="Tee L."/>
            <person name="Thomas D.W."/>
            <person name="Thorpe A."/>
            <person name="Tracey A."/>
            <person name="Tromans A.C."/>
            <person name="Vaudin M."/>
            <person name="Wall M."/>
            <person name="Wallis J.M."/>
            <person name="Whitehead S.L."/>
            <person name="Whittaker P."/>
            <person name="Willey D.L."/>
            <person name="Williams L."/>
            <person name="Williams S.A."/>
            <person name="Wilming L."/>
            <person name="Wray P.W."/>
            <person name="Hubbard T."/>
            <person name="Durbin R.M."/>
            <person name="Bentley D.R."/>
            <person name="Beck S."/>
            <person name="Rogers J."/>
        </authorList>
    </citation>
    <scope>NUCLEOTIDE SEQUENCE [LARGE SCALE GENOMIC DNA]</scope>
</reference>
<reference key="4">
    <citation type="journal article" date="2007" name="Science">
        <title>ATM and ATR substrate analysis reveals extensive protein networks responsive to DNA damage.</title>
        <authorList>
            <person name="Matsuoka S."/>
            <person name="Ballif B.A."/>
            <person name="Smogorzewska A."/>
            <person name="McDonald E.R. III"/>
            <person name="Hurov K.E."/>
            <person name="Luo J."/>
            <person name="Bakalarski C.E."/>
            <person name="Zhao Z."/>
            <person name="Solimini N."/>
            <person name="Lerenthal Y."/>
            <person name="Shiloh Y."/>
            <person name="Gygi S.P."/>
            <person name="Elledge S.J."/>
        </authorList>
    </citation>
    <scope>IDENTIFICATION BY MASS SPECTROMETRY [LARGE SCALE ANALYSIS]</scope>
    <source>
        <tissue>Embryonic kidney</tissue>
    </source>
</reference>
<reference key="5">
    <citation type="journal article" date="2008" name="J. Biol. Chem.">
        <title>Components of the CCR4-NOT complex function as nuclear hormone receptor coactivators via association with the NRC-interacting Factor NIF-1.</title>
        <authorList>
            <person name="Garapaty S."/>
            <person name="Mahajan M.A."/>
            <person name="Samuels H.H."/>
        </authorList>
    </citation>
    <scope>FUNCTION</scope>
    <scope>INTERACTION WITH CNOT6 AND CNOT9</scope>
</reference>
<reference key="6">
    <citation type="journal article" date="2008" name="Proc. Natl. Acad. Sci. U.S.A.">
        <title>A quantitative atlas of mitotic phosphorylation.</title>
        <authorList>
            <person name="Dephoure N."/>
            <person name="Zhou C."/>
            <person name="Villen J."/>
            <person name="Beausoleil S.A."/>
            <person name="Bakalarski C.E."/>
            <person name="Elledge S.J."/>
            <person name="Gygi S.P."/>
        </authorList>
    </citation>
    <scope>PHOSPHORYLATION [LARGE SCALE ANALYSIS] AT SER-1153</scope>
    <scope>IDENTIFICATION BY MASS SPECTROMETRY [LARGE SCALE ANALYSIS]</scope>
    <source>
        <tissue>Cervix carcinoma</tissue>
    </source>
</reference>
<reference key="7">
    <citation type="journal article" date="2009" name="J. Biol. Chem.">
        <title>Identification and characterization of a novel nuclear protein complex involved in nuclear hormone receptor-mediated gene regulation.</title>
        <authorList>
            <person name="Garapaty S."/>
            <person name="Xu C.F."/>
            <person name="Trojer P."/>
            <person name="Mahajan M.A."/>
            <person name="Neubert T.A."/>
            <person name="Samuels H.H."/>
        </authorList>
    </citation>
    <scope>FUNCTION</scope>
    <scope>IDENTIFICATION IN A NUCLEAR RECEPTOR HORMONE COMPLEX</scope>
    <scope>IDENTIFICATION IN A HISTONE METHYLATION COMPLEX</scope>
    <scope>INTERACTION WITH CCAR2; EMSY; RBBP5; ASH2L; WDR5; HCFC1 AND MKI67</scope>
</reference>
<reference key="8">
    <citation type="journal article" date="2013" name="J. Proteome Res.">
        <title>Toward a comprehensive characterization of a human cancer cell phosphoproteome.</title>
        <authorList>
            <person name="Zhou H."/>
            <person name="Di Palma S."/>
            <person name="Preisinger C."/>
            <person name="Peng M."/>
            <person name="Polat A.N."/>
            <person name="Heck A.J."/>
            <person name="Mohammed S."/>
        </authorList>
    </citation>
    <scope>PHOSPHORYLATION [LARGE SCALE ANALYSIS] AT SER-992 AND SER-1007</scope>
    <scope>IDENTIFICATION BY MASS SPECTROMETRY [LARGE SCALE ANALYSIS]</scope>
    <source>
        <tissue>Cervix carcinoma</tissue>
        <tissue>Erythroleukemia</tissue>
    </source>
</reference>
<reference key="9">
    <citation type="journal article" date="2014" name="J. Proteomics">
        <title>An enzyme assisted RP-RPLC approach for in-depth analysis of human liver phosphoproteome.</title>
        <authorList>
            <person name="Bian Y."/>
            <person name="Song C."/>
            <person name="Cheng K."/>
            <person name="Dong M."/>
            <person name="Wang F."/>
            <person name="Huang J."/>
            <person name="Sun D."/>
            <person name="Wang L."/>
            <person name="Ye M."/>
            <person name="Zou H."/>
        </authorList>
    </citation>
    <scope>IDENTIFICATION BY MASS SPECTROMETRY [LARGE SCALE ANALYSIS]</scope>
    <source>
        <tissue>Liver</tissue>
    </source>
</reference>
<reference key="10">
    <citation type="journal article" date="2017" name="Nat. Struct. Mol. Biol.">
        <title>Site-specific mapping of the human SUMO proteome reveals co-modification with phosphorylation.</title>
        <authorList>
            <person name="Hendriks I.A."/>
            <person name="Lyon D."/>
            <person name="Young C."/>
            <person name="Jensen L.J."/>
            <person name="Vertegaal A.C."/>
            <person name="Nielsen M.L."/>
        </authorList>
    </citation>
    <scope>SUMOYLATION [LARGE SCALE ANALYSIS] AT LYS-1022</scope>
    <scope>IDENTIFICATION BY MASS SPECTROMETRY [LARGE SCALE ANALYSIS]</scope>
</reference>
<reference key="11">
    <citation type="journal article" date="2012" name="Cell">
        <title>Microcephaly gene links trithorax and REST/NRSF to control neural stem cell proliferation and differentiation.</title>
        <authorList>
            <person name="Yang Y.J."/>
            <person name="Baltus A.E."/>
            <person name="Mathew R.S."/>
            <person name="Murphy E.A."/>
            <person name="Evrony G.D."/>
            <person name="Gonzalez D.M."/>
            <person name="Wang E.P."/>
            <person name="Marshall-Walker C.A."/>
            <person name="Barry B.J."/>
            <person name="Murn J."/>
            <person name="Tatarakis A."/>
            <person name="Mahajan M.A."/>
            <person name="Samuels H.H."/>
            <person name="Shi Y."/>
            <person name="Golden J.A."/>
            <person name="Mahajnah M."/>
            <person name="Shenhav R."/>
            <person name="Walsh C.A."/>
        </authorList>
    </citation>
    <scope>VARIANT MCPH10 HIS-1111</scope>
    <scope>CHARACTERIZATION OF VARIANT MCPH10 HIS-1111</scope>
    <scope>FUNCTION IN NEUROGENESIS</scope>
    <scope>INTERACTION WITH ASH2L; CXXC1; KMT2A/MLL1; MKI67; RBBP5; SETD1A AND WDR5</scope>
    <scope>TISSUE SPECIFICITY</scope>
    <scope>DEVELOPMENTAL STAGE</scope>
</reference>
<sequence>MEENEVESSSDAAPGPGRPEEPSESGLGVGTSEAVSADSSDAAAAPGQAEADDSGVGQSSDRGSRSQEEVSESSSSADPLPNSYLPDSSSVSHGPVAGVTGGPPALVHSSALPDPNMLVSDCTASSSDLGSAIDKIIESTIGPDLIQNCITVTSAEDGGAETTRYLILQGPDDGAPMTSPMSSSTLAHSLAAIEALADGPTSTSTCLEAQGGPSSPVQLPPASGAEEPDLQSLEAMMEVVVVQQFKCKMCQYRSSTKATLLRHMRERHFRPVAAAAAAAGKKGRLRKWSTSTKSQEEEGPEEEDDDDIVDAGAIDDLEEDSDYNPAEDEPRGRQLRLQRPTPSTPRPRRRPGRPRKLPRLEISDLPDGVEGEPLVSSQSGQSPPEPQDPEAPSSSGPGHLVAMGKVSRTPVEAGVSQSDAENAAPSCPDEHDTLPRRRGRPSRRFLGKKYRKYYYKSPKPLLRPFLCRICGSRFLSHEDLRFHVNSHEAGDPQLFKCLQCSYRSRRWSSLKEHMFNHVGSKPYKCDECSYTSVYRKDVIRHAAVHSRDRKKRPDPTPKLSSFPCPVCGRVYPMQKRLTQHMKTHSTEKPHMCDKCGKSFKKRYTFKMHLLTHIQAVANRRFKCEFCEFVCEDKKALLNHQLSHVSDKPFKCSFCPYRTFREDFLLSHVAVKHTGAKPFACEYCHFSTRHKKNLRLHVRCRHASSFEEWGRRHPEEPPSRRRPFFSLQQIEELKQQHSAAPGPPPSSPGPPEIPPEATTFQSSEAPSLLCSDTLGGATIIYQQGAEESTAMATQTALDLLLNMSAQRELGGTALQVAVVKSEDVEAGLASPGGQPSPEGATPQVVTLHVAEPGGGAAAESQLGPPDLPQITLAPGPFGGTGYSVITAPPMEEGTSAPGTPYSEEPAGEAAQAVVVSDTLKEAGTHYIMATDGTQLHHIELTADGSISFPSPDALASGAKWPLLQCGGLPRDGPEPPSPAKTHCVGDSQSSASSPPATSKALGLAVPPSPPSAATAASKKFSCKICAEAFPGRAEMESHKRAHAGPGAFKCPDCPFSARQWPEVRAHMAQHSSLRPHQCSQCSFASKNKKDLRRHMLTHTKEKPFACHLCGQRFNRNGHLKFHIQRLHSPDGRKSGTPTARAPTQTPTQTIILNSDDETLATLHTALQSSHGVLGPERLQQALSQEHIIVAQEQTVTNQEEAAYIQEITTADGQTVQHLVTSDNQVQYIISQDGVQHLLPQEYVVVPEGHHIQVQEGQITHIQYEQGAPFLQESQIQYVPVSPGQQLVTQAQLEAAAHSAVTAVADAAMAQAQGLFGTDETVPEHIQQLQHQGIEYDVITLADD</sequence>
<protein>
    <recommendedName>
        <fullName>Zinc finger protein 335</fullName>
    </recommendedName>
    <alternativeName>
        <fullName>NRC-interacting factor 1</fullName>
        <shortName>NIF-1</shortName>
    </alternativeName>
</protein>
<keyword id="KW-0010">Activator</keyword>
<keyword id="KW-0025">Alternative splicing</keyword>
<keyword id="KW-0217">Developmental protein</keyword>
<keyword id="KW-0225">Disease variant</keyword>
<keyword id="KW-0238">DNA-binding</keyword>
<keyword id="KW-0991">Intellectual disability</keyword>
<keyword id="KW-1017">Isopeptide bond</keyword>
<keyword id="KW-0479">Metal-binding</keyword>
<keyword id="KW-0539">Nucleus</keyword>
<keyword id="KW-0597">Phosphoprotein</keyword>
<keyword id="KW-0905">Primary microcephaly</keyword>
<keyword id="KW-1267">Proteomics identification</keyword>
<keyword id="KW-1185">Reference proteome</keyword>
<keyword id="KW-0677">Repeat</keyword>
<keyword id="KW-0804">Transcription</keyword>
<keyword id="KW-0805">Transcription regulation</keyword>
<keyword id="KW-0832">Ubl conjugation</keyword>
<keyword id="KW-0862">Zinc</keyword>
<keyword id="KW-0863">Zinc-finger</keyword>
<comment type="function">
    <text evidence="4 6 7 8">Component or associated component of some histone methyltransferase complexes may regulate transcription through recruitment of those complexes on gene promoters (PubMed:19131338, PubMed:23178126). Enhances ligand-dependent transcriptional activation by nuclear hormone receptors (PubMed:12215545, PubMed:18180299, PubMed:19131338). Plays an important role in neural progenitor cell proliferation and self-renewal through the regulation of specific genes involved brain development, including REST (PubMed:23178126). Also controls the expression of genes involved in somatic development and regulates, for instance, lymphoblast proliferation (PubMed:23178126).</text>
</comment>
<comment type="subunit">
    <text evidence="4 6 7 8">Interacts with NCOA6; may enhance ligand-dependent transcriptional activation by nuclear hormone receptors (PubMed:12215545). Interacts with CNOT6 (PubMed:18180299). Interacts with CNOT9; the interaction is direct (PubMed:18180299). Component of a nuclear receptor-mediated transcription complex composed of at least ZNF335, CCAR2 and EMSY; the complex stimulates the transcription of nuclear receptor target genes such as SOX9 and HOXA1 (PubMed:19131338). Within the complex interacts with EMSY and interacts (via C-terminus) with CCAR2 (PubMed:19131338). Interacts with members of histone H3'Lys4'(H3K4) methyltransferase complexes ASH2L, CXXC1, KMT2A/MLL1, RBBP5, SETD1A and WDR5 (PubMed:23178126). Component of a histone methylation complex composed of at least ZNF335, RBBP5, ASH2L and WDR5; the complex may have histone H3-specific methyltransferase activity, however does not have specificity for 'Lys-4' of histone H3 (PubMed:19131338). Interacts with RBBP5 and WDR5 (PubMed:19131338). Interacts with ASHL2 (PubMed:19131338). Components of this complex may associate with components of the ZNF335-CCAR2-EMSY nuclear receptor-mediated transcription complex to form a complex at least composed of ZNF335, HCFC1, CCAR2, EMSY, MKI67, RBBP5, ASH2L and WDR5 (PubMed:19131338). Within this complex also interacts with HCFC1 and MKI67 (PubMed:19131338).</text>
</comment>
<comment type="interaction">
    <interactant intactId="EBI-2795590">
        <id>Q9H4Z2</id>
    </interactant>
    <interactant intactId="EBI-355410">
        <id>Q8N163</id>
        <label>CCAR2</label>
    </interactant>
    <organismsDiffer>false</organismsDiffer>
    <experiments>5</experiments>
</comment>
<comment type="subcellular location">
    <subcellularLocation>
        <location evidence="4">Nucleus</location>
    </subcellularLocation>
</comment>
<comment type="alternative products">
    <event type="alternative splicing"/>
    <isoform>
        <id>Q9H4Z2-1</id>
        <name>1</name>
        <sequence type="displayed"/>
    </isoform>
    <isoform>
        <id>Q9H4Z2-2</id>
        <name>2</name>
        <sequence type="described" ref="VSP_035791 VSP_035792"/>
    </isoform>
</comment>
<comment type="tissue specificity">
    <text evidence="4 8">Ubiquitously expressed.</text>
</comment>
<comment type="developmental stage">
    <text evidence="8">Widely expressed in fetal tissues including fetal brain.</text>
</comment>
<comment type="disease" evidence="8">
    <disease id="DI-03647">
        <name>Microcephaly 10, primary, autosomal recessive</name>
        <acronym>MCPH10</acronym>
        <description>A form of microcephaly, a disease defined as a head circumference more than 3 standard deviations below the age-related mean. Brain weight is markedly reduced and the cerebral cortex is disproportionately small. MCPH10 is characterized by extremely small head size and death usually by 1 year of age. Neuropathologic examination shows severe loss of neurons as well as neuronal loss of polarity and abnormal dendritic maturation.</description>
        <dbReference type="MIM" id="615095"/>
    </disease>
    <text>The disease is caused by variants affecting the gene represented in this entry.</text>
</comment>
<comment type="similarity">
    <text evidence="10">Belongs to the krueppel C2H2-type zinc-finger protein family.</text>
</comment>
<comment type="sequence caution" evidence="10">
    <conflict type="erroneous initiation">
        <sequence resource="EMBL-CDS" id="BAB15379"/>
    </conflict>
</comment>
<evidence type="ECO:0000250" key="1">
    <source>
        <dbReference type="UniProtKB" id="G3V893"/>
    </source>
</evidence>
<evidence type="ECO:0000255" key="2">
    <source>
        <dbReference type="PROSITE-ProRule" id="PRU00042"/>
    </source>
</evidence>
<evidence type="ECO:0000256" key="3">
    <source>
        <dbReference type="SAM" id="MobiDB-lite"/>
    </source>
</evidence>
<evidence type="ECO:0000269" key="4">
    <source>
    </source>
</evidence>
<evidence type="ECO:0000269" key="5">
    <source>
    </source>
</evidence>
<evidence type="ECO:0000269" key="6">
    <source>
    </source>
</evidence>
<evidence type="ECO:0000269" key="7">
    <source>
    </source>
</evidence>
<evidence type="ECO:0000269" key="8">
    <source>
    </source>
</evidence>
<evidence type="ECO:0000303" key="9">
    <source>
    </source>
</evidence>
<evidence type="ECO:0000305" key="10"/>
<evidence type="ECO:0007744" key="11">
    <source>
    </source>
</evidence>
<evidence type="ECO:0007744" key="12">
    <source>
    </source>
</evidence>
<evidence type="ECO:0007744" key="13">
    <source>
    </source>
</evidence>
<feature type="chain" id="PRO_0000047538" description="Zinc finger protein 335">
    <location>
        <begin position="1"/>
        <end position="1342"/>
    </location>
</feature>
<feature type="zinc finger region" description="C2H2-type 1" evidence="2">
    <location>
        <begin position="245"/>
        <end position="268"/>
    </location>
</feature>
<feature type="zinc finger region" description="C2H2-type 2" evidence="2">
    <location>
        <begin position="465"/>
        <end position="487"/>
    </location>
</feature>
<feature type="zinc finger region" description="C2H2-type 3" evidence="2">
    <location>
        <begin position="495"/>
        <end position="517"/>
    </location>
</feature>
<feature type="zinc finger region" description="C2H2-type 4" evidence="2">
    <location>
        <begin position="523"/>
        <end position="545"/>
    </location>
</feature>
<feature type="zinc finger region" description="C2H2-type 5" evidence="2">
    <location>
        <begin position="562"/>
        <end position="584"/>
    </location>
</feature>
<feature type="zinc finger region" description="C2H2-type 6" evidence="2">
    <location>
        <begin position="590"/>
        <end position="612"/>
    </location>
</feature>
<feature type="zinc finger region" description="C2H2-type 7" evidence="2">
    <location>
        <begin position="621"/>
        <end position="643"/>
    </location>
</feature>
<feature type="zinc finger region" description="C2H2-type 8" evidence="2">
    <location>
        <begin position="649"/>
        <end position="672"/>
    </location>
</feature>
<feature type="zinc finger region" description="C2H2-type 9" evidence="2">
    <location>
        <begin position="678"/>
        <end position="701"/>
    </location>
</feature>
<feature type="zinc finger region" description="C2H2-type 10" evidence="2">
    <location>
        <begin position="1019"/>
        <end position="1041"/>
    </location>
</feature>
<feature type="zinc finger region" description="C2H2-type 11" evidence="2">
    <location>
        <begin position="1047"/>
        <end position="1069"/>
    </location>
</feature>
<feature type="zinc finger region" description="C2H2-type 12" evidence="2">
    <location>
        <begin position="1075"/>
        <end position="1097"/>
    </location>
</feature>
<feature type="zinc finger region" description="C2H2-type 13" evidence="2">
    <location>
        <begin position="1103"/>
        <end position="1126"/>
    </location>
</feature>
<feature type="region of interest" description="Disordered" evidence="3">
    <location>
        <begin position="1"/>
        <end position="102"/>
    </location>
</feature>
<feature type="region of interest" description="Disordered" evidence="3">
    <location>
        <begin position="201"/>
        <end position="228"/>
    </location>
</feature>
<feature type="region of interest" description="Disordered" evidence="3">
    <location>
        <begin position="274"/>
        <end position="442"/>
    </location>
</feature>
<feature type="region of interest" description="Disordered" evidence="3">
    <location>
        <begin position="732"/>
        <end position="763"/>
    </location>
</feature>
<feature type="region of interest" description="Disordered" evidence="3">
    <location>
        <begin position="964"/>
        <end position="1013"/>
    </location>
</feature>
<feature type="region of interest" description="Involved in the interaction with CCAR2" evidence="7">
    <location>
        <begin position="1041"/>
        <end position="1342"/>
    </location>
</feature>
<feature type="compositionally biased region" description="Low complexity" evidence="3">
    <location>
        <begin position="34"/>
        <end position="49"/>
    </location>
</feature>
<feature type="compositionally biased region" description="Polar residues" evidence="3">
    <location>
        <begin position="201"/>
        <end position="217"/>
    </location>
</feature>
<feature type="compositionally biased region" description="Acidic residues" evidence="3">
    <location>
        <begin position="297"/>
        <end position="327"/>
    </location>
</feature>
<feature type="compositionally biased region" description="Basic residues" evidence="3">
    <location>
        <begin position="346"/>
        <end position="357"/>
    </location>
</feature>
<feature type="compositionally biased region" description="Pro residues" evidence="3">
    <location>
        <begin position="740"/>
        <end position="753"/>
    </location>
</feature>
<feature type="compositionally biased region" description="Low complexity" evidence="3">
    <location>
        <begin position="986"/>
        <end position="997"/>
    </location>
</feature>
<feature type="modified residue" description="Phosphoserine" evidence="1">
    <location>
        <position position="976"/>
    </location>
</feature>
<feature type="modified residue" description="Phosphoserine" evidence="12">
    <location>
        <position position="992"/>
    </location>
</feature>
<feature type="modified residue" description="Phosphoserine" evidence="12">
    <location>
        <position position="1007"/>
    </location>
</feature>
<feature type="modified residue" description="Phosphoserine" evidence="11">
    <location>
        <position position="1153"/>
    </location>
</feature>
<feature type="cross-link" description="Glycyl lysine isopeptide (Lys-Gly) (interchain with G-Cter in SUMO2)" evidence="13">
    <location>
        <position position="1022"/>
    </location>
</feature>
<feature type="splice variant" id="VSP_035791" description="In isoform 2." evidence="9">
    <location>
        <begin position="1"/>
        <end position="155"/>
    </location>
</feature>
<feature type="splice variant" id="VSP_035792" description="In isoform 2." evidence="9">
    <original>EDGGAETTRYLILQGPDD</original>
    <variation>MATSSMPESERNVATKAS</variation>
    <location>
        <begin position="156"/>
        <end position="173"/>
    </location>
</feature>
<feature type="sequence variant" id="VAR_047560" description="In dbSNP:rs6130982.">
    <original>R</original>
    <variation>C</variation>
    <location>
        <position position="65"/>
    </location>
</feature>
<feature type="sequence variant" id="VAR_047561" description="In dbSNP:rs6094231.">
    <original>G</original>
    <variation>S</variation>
    <location>
        <position position="101"/>
    </location>
</feature>
<feature type="sequence variant" id="VAR_024211" description="In dbSNP:rs6032606." evidence="5">
    <original>S</original>
    <variation>T</variation>
    <location>
        <position position="294"/>
    </location>
</feature>
<feature type="sequence variant" id="VAR_047562" description="In dbSNP:rs16990961.">
    <original>Y</original>
    <variation>H</variation>
    <location>
        <position position="603"/>
    </location>
</feature>
<feature type="sequence variant" id="VAR_069469" description="In MCPH10; hypomorphic mutation; may cause altered transcript but some full-length protein is still formed; dbSNP:rs397514642." evidence="8">
    <original>R</original>
    <variation>H</variation>
    <location>
        <position position="1111"/>
    </location>
</feature>
<feature type="sequence conflict" description="In Ref. 2; BAG59529." evidence="10" ref="2">
    <original>E</original>
    <variation>G</variation>
    <location>
        <position position="227"/>
    </location>
</feature>
<name>ZN335_HUMAN</name>
<proteinExistence type="evidence at protein level"/>
<dbReference type="EMBL" id="AF395833">
    <property type="protein sequence ID" value="AAN09900.1"/>
    <property type="molecule type" value="mRNA"/>
</dbReference>
<dbReference type="EMBL" id="AK026157">
    <property type="protein sequence ID" value="BAB15379.1"/>
    <property type="status" value="ALT_INIT"/>
    <property type="molecule type" value="mRNA"/>
</dbReference>
<dbReference type="EMBL" id="AK296989">
    <property type="protein sequence ID" value="BAG59529.1"/>
    <property type="molecule type" value="mRNA"/>
</dbReference>
<dbReference type="EMBL" id="AL162458">
    <property type="status" value="NOT_ANNOTATED_CDS"/>
    <property type="molecule type" value="Genomic_DNA"/>
</dbReference>
<dbReference type="CCDS" id="CCDS13389.1">
    <molecule id="Q9H4Z2-1"/>
</dbReference>
<dbReference type="RefSeq" id="NP_071378.1">
    <molecule id="Q9H4Z2-1"/>
    <property type="nucleotide sequence ID" value="NM_022095.4"/>
</dbReference>
<dbReference type="RefSeq" id="XP_047296319.1">
    <molecule id="Q9H4Z2-1"/>
    <property type="nucleotide sequence ID" value="XM_047440363.1"/>
</dbReference>
<dbReference type="SMR" id="Q9H4Z2"/>
<dbReference type="BioGRID" id="121994">
    <property type="interactions" value="25"/>
</dbReference>
<dbReference type="CORUM" id="Q9H4Z2"/>
<dbReference type="FunCoup" id="Q9H4Z2">
    <property type="interactions" value="2909"/>
</dbReference>
<dbReference type="IntAct" id="Q9H4Z2">
    <property type="interactions" value="27"/>
</dbReference>
<dbReference type="STRING" id="9606.ENSP00000325326"/>
<dbReference type="GlyCosmos" id="Q9H4Z2">
    <property type="glycosylation" value="1 site, 1 glycan"/>
</dbReference>
<dbReference type="GlyGen" id="Q9H4Z2">
    <property type="glycosylation" value="3 sites, 1 O-linked glycan (1 site)"/>
</dbReference>
<dbReference type="iPTMnet" id="Q9H4Z2"/>
<dbReference type="PhosphoSitePlus" id="Q9H4Z2"/>
<dbReference type="BioMuta" id="ZNF335"/>
<dbReference type="DMDM" id="20141037"/>
<dbReference type="jPOST" id="Q9H4Z2"/>
<dbReference type="MassIVE" id="Q9H4Z2"/>
<dbReference type="PaxDb" id="9606-ENSP00000325326"/>
<dbReference type="PeptideAtlas" id="Q9H4Z2"/>
<dbReference type="ProteomicsDB" id="80883">
    <molecule id="Q9H4Z2-1"/>
</dbReference>
<dbReference type="ProteomicsDB" id="80884">
    <molecule id="Q9H4Z2-2"/>
</dbReference>
<dbReference type="Pumba" id="Q9H4Z2"/>
<dbReference type="Antibodypedia" id="27906">
    <property type="antibodies" value="115 antibodies from 27 providers"/>
</dbReference>
<dbReference type="DNASU" id="63925"/>
<dbReference type="Ensembl" id="ENST00000322927.3">
    <molecule id="Q9H4Z2-1"/>
    <property type="protein sequence ID" value="ENSP00000325326.2"/>
    <property type="gene ID" value="ENSG00000198026.8"/>
</dbReference>
<dbReference type="GeneID" id="63925"/>
<dbReference type="KEGG" id="hsa:63925"/>
<dbReference type="MANE-Select" id="ENST00000322927.3">
    <property type="protein sequence ID" value="ENSP00000325326.2"/>
    <property type="RefSeq nucleotide sequence ID" value="NM_022095.4"/>
    <property type="RefSeq protein sequence ID" value="NP_071378.1"/>
</dbReference>
<dbReference type="UCSC" id="uc002xqw.4">
    <molecule id="Q9H4Z2-1"/>
    <property type="organism name" value="human"/>
</dbReference>
<dbReference type="AGR" id="HGNC:15807"/>
<dbReference type="CTD" id="63925"/>
<dbReference type="DisGeNET" id="63925"/>
<dbReference type="GeneCards" id="ZNF335"/>
<dbReference type="HGNC" id="HGNC:15807">
    <property type="gene designation" value="ZNF335"/>
</dbReference>
<dbReference type="HPA" id="ENSG00000198026">
    <property type="expression patterns" value="Low tissue specificity"/>
</dbReference>
<dbReference type="MalaCards" id="ZNF335"/>
<dbReference type="MIM" id="610827">
    <property type="type" value="gene"/>
</dbReference>
<dbReference type="MIM" id="615095">
    <property type="type" value="phenotype"/>
</dbReference>
<dbReference type="neXtProt" id="NX_Q9H4Z2"/>
<dbReference type="OpenTargets" id="ENSG00000198026"/>
<dbReference type="Orphanet" id="329228">
    <property type="disease" value="Microcephalic primordial dwarfism due to ZNF335 deficiency"/>
</dbReference>
<dbReference type="PharmGKB" id="PA38041"/>
<dbReference type="VEuPathDB" id="HostDB:ENSG00000198026"/>
<dbReference type="eggNOG" id="KOG1721">
    <property type="taxonomic scope" value="Eukaryota"/>
</dbReference>
<dbReference type="GeneTree" id="ENSGT00940000158508"/>
<dbReference type="HOGENOM" id="CLU_006340_0_0_1"/>
<dbReference type="InParanoid" id="Q9H4Z2"/>
<dbReference type="OMA" id="QHMRERH"/>
<dbReference type="OrthoDB" id="8117402at2759"/>
<dbReference type="PAN-GO" id="Q9H4Z2">
    <property type="GO annotations" value="7 GO annotations based on evolutionary models"/>
</dbReference>
<dbReference type="PhylomeDB" id="Q9H4Z2"/>
<dbReference type="TreeFam" id="TF332472"/>
<dbReference type="PathwayCommons" id="Q9H4Z2"/>
<dbReference type="Reactome" id="R-HSA-5617472">
    <property type="pathway name" value="Activation of anterior HOX genes in hindbrain development during early embryogenesis"/>
</dbReference>
<dbReference type="SignaLink" id="Q9H4Z2"/>
<dbReference type="BioGRID-ORCS" id="63925">
    <property type="hits" value="515 hits in 1187 CRISPR screens"/>
</dbReference>
<dbReference type="CD-CODE" id="1A18FFC4">
    <property type="entry name" value="Paraspeckle"/>
</dbReference>
<dbReference type="ChiTaRS" id="ZNF335">
    <property type="organism name" value="human"/>
</dbReference>
<dbReference type="GenomeRNAi" id="63925"/>
<dbReference type="Pharos" id="Q9H4Z2">
    <property type="development level" value="Tbio"/>
</dbReference>
<dbReference type="PRO" id="PR:Q9H4Z2"/>
<dbReference type="Proteomes" id="UP000005640">
    <property type="component" value="Chromosome 20"/>
</dbReference>
<dbReference type="RNAct" id="Q9H4Z2">
    <property type="molecule type" value="protein"/>
</dbReference>
<dbReference type="Bgee" id="ENSG00000198026">
    <property type="expression patterns" value="Expressed in granulocyte and 127 other cell types or tissues"/>
</dbReference>
<dbReference type="GO" id="GO:0035097">
    <property type="term" value="C:histone methyltransferase complex"/>
    <property type="evidence" value="ECO:0007669"/>
    <property type="project" value="Ensembl"/>
</dbReference>
<dbReference type="GO" id="GO:0005654">
    <property type="term" value="C:nucleoplasm"/>
    <property type="evidence" value="ECO:0000314"/>
    <property type="project" value="HPA"/>
</dbReference>
<dbReference type="GO" id="GO:0005634">
    <property type="term" value="C:nucleus"/>
    <property type="evidence" value="ECO:0000250"/>
    <property type="project" value="UniProtKB"/>
</dbReference>
<dbReference type="GO" id="GO:1990226">
    <property type="term" value="F:histone methyltransferase binding"/>
    <property type="evidence" value="ECO:0007669"/>
    <property type="project" value="Ensembl"/>
</dbReference>
<dbReference type="GO" id="GO:0000978">
    <property type="term" value="F:RNA polymerase II cis-regulatory region sequence-specific DNA binding"/>
    <property type="evidence" value="ECO:0000318"/>
    <property type="project" value="GO_Central"/>
</dbReference>
<dbReference type="GO" id="GO:0000976">
    <property type="term" value="F:transcription cis-regulatory region binding"/>
    <property type="evidence" value="ECO:0000250"/>
    <property type="project" value="UniProtKB"/>
</dbReference>
<dbReference type="GO" id="GO:0008270">
    <property type="term" value="F:zinc ion binding"/>
    <property type="evidence" value="ECO:0007669"/>
    <property type="project" value="UniProtKB-KW"/>
</dbReference>
<dbReference type="GO" id="GO:0007420">
    <property type="term" value="P:brain development"/>
    <property type="evidence" value="ECO:0000315"/>
    <property type="project" value="UniProtKB"/>
</dbReference>
<dbReference type="GO" id="GO:0048854">
    <property type="term" value="P:brain morphogenesis"/>
    <property type="evidence" value="ECO:0007669"/>
    <property type="project" value="Ensembl"/>
</dbReference>
<dbReference type="GO" id="GO:0021895">
    <property type="term" value="P:cerebral cortex neuron differentiation"/>
    <property type="evidence" value="ECO:0007669"/>
    <property type="project" value="Ensembl"/>
</dbReference>
<dbReference type="GO" id="GO:0040029">
    <property type="term" value="P:epigenetic regulation of gene expression"/>
    <property type="evidence" value="ECO:0000315"/>
    <property type="project" value="UniProtKB"/>
</dbReference>
<dbReference type="GO" id="GO:0001701">
    <property type="term" value="P:in utero embryonic development"/>
    <property type="evidence" value="ECO:0007669"/>
    <property type="project" value="Ensembl"/>
</dbReference>
<dbReference type="GO" id="GO:0048812">
    <property type="term" value="P:neuron projection morphogenesis"/>
    <property type="evidence" value="ECO:0000250"/>
    <property type="project" value="UniProtKB"/>
</dbReference>
<dbReference type="GO" id="GO:0050671">
    <property type="term" value="P:positive regulation of lymphocyte proliferation"/>
    <property type="evidence" value="ECO:0000315"/>
    <property type="project" value="UniProtKB"/>
</dbReference>
<dbReference type="GO" id="GO:0002052">
    <property type="term" value="P:positive regulation of neuroblast proliferation"/>
    <property type="evidence" value="ECO:0000250"/>
    <property type="project" value="UniProtKB"/>
</dbReference>
<dbReference type="GO" id="GO:0050769">
    <property type="term" value="P:positive regulation of neurogenesis"/>
    <property type="evidence" value="ECO:0000315"/>
    <property type="project" value="UniProtKB"/>
</dbReference>
<dbReference type="GO" id="GO:0045944">
    <property type="term" value="P:positive regulation of transcription by RNA polymerase II"/>
    <property type="evidence" value="ECO:0000318"/>
    <property type="project" value="GO_Central"/>
</dbReference>
<dbReference type="FunFam" id="3.30.160.60:FF:000444">
    <property type="entry name" value="Zinc finger protein 335"/>
    <property type="match status" value="1"/>
</dbReference>
<dbReference type="FunFam" id="3.30.160.60:FF:000714">
    <property type="entry name" value="Zinc finger protein 335"/>
    <property type="match status" value="1"/>
</dbReference>
<dbReference type="FunFam" id="3.30.160.60:FF:000764">
    <property type="entry name" value="Zinc finger protein 335"/>
    <property type="match status" value="1"/>
</dbReference>
<dbReference type="FunFam" id="3.30.160.60:FF:000796">
    <property type="entry name" value="Zinc finger protein 335"/>
    <property type="match status" value="1"/>
</dbReference>
<dbReference type="FunFam" id="3.30.160.60:FF:000876">
    <property type="entry name" value="Zinc finger protein 335"/>
    <property type="match status" value="1"/>
</dbReference>
<dbReference type="FunFam" id="3.30.160.60:FF:000930">
    <property type="entry name" value="Zinc finger protein 335"/>
    <property type="match status" value="1"/>
</dbReference>
<dbReference type="Gene3D" id="3.30.160.60">
    <property type="entry name" value="Classic Zinc Finger"/>
    <property type="match status" value="7"/>
</dbReference>
<dbReference type="InterPro" id="IPR050688">
    <property type="entry name" value="Zinc_finger/UBP_domain"/>
</dbReference>
<dbReference type="InterPro" id="IPR036236">
    <property type="entry name" value="Znf_C2H2_sf"/>
</dbReference>
<dbReference type="InterPro" id="IPR013087">
    <property type="entry name" value="Znf_C2H2_type"/>
</dbReference>
<dbReference type="PANTHER" id="PTHR24403">
    <property type="entry name" value="ZINC FINGER PROTEIN"/>
    <property type="match status" value="1"/>
</dbReference>
<dbReference type="PANTHER" id="PTHR24403:SF36">
    <property type="entry name" value="ZINC FINGER PROTEIN 335"/>
    <property type="match status" value="1"/>
</dbReference>
<dbReference type="Pfam" id="PF00096">
    <property type="entry name" value="zf-C2H2"/>
    <property type="match status" value="2"/>
</dbReference>
<dbReference type="Pfam" id="PF13912">
    <property type="entry name" value="zf-C2H2_6"/>
    <property type="match status" value="1"/>
</dbReference>
<dbReference type="Pfam" id="PF13909">
    <property type="entry name" value="zf-H2C2_5"/>
    <property type="match status" value="1"/>
</dbReference>
<dbReference type="SMART" id="SM00355">
    <property type="entry name" value="ZnF_C2H2"/>
    <property type="match status" value="13"/>
</dbReference>
<dbReference type="SUPFAM" id="SSF57667">
    <property type="entry name" value="beta-beta-alpha zinc fingers"/>
    <property type="match status" value="7"/>
</dbReference>
<dbReference type="PROSITE" id="PS00028">
    <property type="entry name" value="ZINC_FINGER_C2H2_1"/>
    <property type="match status" value="6"/>
</dbReference>
<dbReference type="PROSITE" id="PS50157">
    <property type="entry name" value="ZINC_FINGER_C2H2_2"/>
    <property type="match status" value="13"/>
</dbReference>
<organism>
    <name type="scientific">Homo sapiens</name>
    <name type="common">Human</name>
    <dbReference type="NCBI Taxonomy" id="9606"/>
    <lineage>
        <taxon>Eukaryota</taxon>
        <taxon>Metazoa</taxon>
        <taxon>Chordata</taxon>
        <taxon>Craniata</taxon>
        <taxon>Vertebrata</taxon>
        <taxon>Euteleostomi</taxon>
        <taxon>Mammalia</taxon>
        <taxon>Eutheria</taxon>
        <taxon>Euarchontoglires</taxon>
        <taxon>Primates</taxon>
        <taxon>Haplorrhini</taxon>
        <taxon>Catarrhini</taxon>
        <taxon>Hominidae</taxon>
        <taxon>Homo</taxon>
    </lineage>
</organism>
<gene>
    <name type="primary">ZNF335</name>
</gene>